<accession>P9WL89</accession>
<accession>L0TCY2</accession>
<accession>P65015</accession>
<accession>Q50650</accession>
<keyword id="KW-1003">Cell membrane</keyword>
<keyword id="KW-0472">Membrane</keyword>
<keyword id="KW-1185">Reference proteome</keyword>
<keyword id="KW-0812">Transmembrane</keyword>
<keyword id="KW-1133">Transmembrane helix</keyword>
<keyword id="KW-0813">Transport</keyword>
<dbReference type="EMBL" id="AL123456">
    <property type="protein sequence ID" value="CCP45367.1"/>
    <property type="molecule type" value="Genomic_DNA"/>
</dbReference>
<dbReference type="PIR" id="B70724">
    <property type="entry name" value="B70724"/>
</dbReference>
<dbReference type="RefSeq" id="NP_217087.1">
    <property type="nucleotide sequence ID" value="NC_000962.3"/>
</dbReference>
<dbReference type="RefSeq" id="WP_003899381.1">
    <property type="nucleotide sequence ID" value="NZ_NVQJ01000023.1"/>
</dbReference>
<dbReference type="SMR" id="P9WL89"/>
<dbReference type="STRING" id="83332.Rv2571c"/>
<dbReference type="PaxDb" id="83332-Rv2571c"/>
<dbReference type="DNASU" id="887382"/>
<dbReference type="GeneID" id="887382"/>
<dbReference type="KEGG" id="mtu:Rv2571c"/>
<dbReference type="KEGG" id="mtv:RVBD_2571c"/>
<dbReference type="TubercuList" id="Rv2571c"/>
<dbReference type="eggNOG" id="COG4129">
    <property type="taxonomic scope" value="Bacteria"/>
</dbReference>
<dbReference type="InParanoid" id="P9WL89"/>
<dbReference type="OrthoDB" id="5198202at2"/>
<dbReference type="Proteomes" id="UP000001584">
    <property type="component" value="Chromosome"/>
</dbReference>
<dbReference type="GO" id="GO:0005886">
    <property type="term" value="C:plasma membrane"/>
    <property type="evidence" value="ECO:0007669"/>
    <property type="project" value="UniProtKB-SubCell"/>
</dbReference>
<dbReference type="InterPro" id="IPR049453">
    <property type="entry name" value="Memb_transporter_dom"/>
</dbReference>
<dbReference type="Pfam" id="PF13515">
    <property type="entry name" value="FUSC_2"/>
    <property type="match status" value="1"/>
</dbReference>
<proteinExistence type="evidence at protein level"/>
<gene>
    <name type="ordered locus">Rv2571c</name>
    <name type="ORF">MTCY227.30</name>
</gene>
<feature type="chain" id="PRO_0000104052" description="Putative arylamide transporter">
    <location>
        <begin position="1"/>
        <end position="355"/>
    </location>
</feature>
<feature type="transmembrane region" description="Helical" evidence="1">
    <location>
        <begin position="22"/>
        <end position="42"/>
    </location>
</feature>
<feature type="transmembrane region" description="Helical" evidence="1">
    <location>
        <begin position="44"/>
        <end position="64"/>
    </location>
</feature>
<feature type="transmembrane region" description="Helical" evidence="1">
    <location>
        <begin position="71"/>
        <end position="91"/>
    </location>
</feature>
<feature type="transmembrane region" description="Helical" evidence="1">
    <location>
        <begin position="92"/>
        <end position="112"/>
    </location>
</feature>
<feature type="transmembrane region" description="Helical" evidence="1">
    <location>
        <begin position="119"/>
        <end position="139"/>
    </location>
</feature>
<feature type="transmembrane region" description="Helical" evidence="1">
    <location>
        <begin position="150"/>
        <end position="170"/>
    </location>
</feature>
<protein>
    <recommendedName>
        <fullName evidence="3">Putative arylamide transporter</fullName>
    </recommendedName>
</protein>
<reference key="1">
    <citation type="journal article" date="1998" name="Nature">
        <title>Deciphering the biology of Mycobacterium tuberculosis from the complete genome sequence.</title>
        <authorList>
            <person name="Cole S.T."/>
            <person name="Brosch R."/>
            <person name="Parkhill J."/>
            <person name="Garnier T."/>
            <person name="Churcher C.M."/>
            <person name="Harris D.E."/>
            <person name="Gordon S.V."/>
            <person name="Eiglmeier K."/>
            <person name="Gas S."/>
            <person name="Barry C.E. III"/>
            <person name="Tekaia F."/>
            <person name="Badcock K."/>
            <person name="Basham D."/>
            <person name="Brown D."/>
            <person name="Chillingworth T."/>
            <person name="Connor R."/>
            <person name="Davies R.M."/>
            <person name="Devlin K."/>
            <person name="Feltwell T."/>
            <person name="Gentles S."/>
            <person name="Hamlin N."/>
            <person name="Holroyd S."/>
            <person name="Hornsby T."/>
            <person name="Jagels K."/>
            <person name="Krogh A."/>
            <person name="McLean J."/>
            <person name="Moule S."/>
            <person name="Murphy L.D."/>
            <person name="Oliver S."/>
            <person name="Osborne J."/>
            <person name="Quail M.A."/>
            <person name="Rajandream M.A."/>
            <person name="Rogers J."/>
            <person name="Rutter S."/>
            <person name="Seeger K."/>
            <person name="Skelton S."/>
            <person name="Squares S."/>
            <person name="Squares R."/>
            <person name="Sulston J.E."/>
            <person name="Taylor K."/>
            <person name="Whitehead S."/>
            <person name="Barrell B.G."/>
        </authorList>
    </citation>
    <scope>NUCLEOTIDE SEQUENCE [LARGE SCALE GENOMIC DNA]</scope>
    <source>
        <strain>ATCC 25618 / H37Rv</strain>
    </source>
</reference>
<reference key="2">
    <citation type="journal article" date="2011" name="Mol. Cell. Proteomics">
        <title>Proteogenomic analysis of Mycobacterium tuberculosis by high resolution mass spectrometry.</title>
        <authorList>
            <person name="Kelkar D.S."/>
            <person name="Kumar D."/>
            <person name="Kumar P."/>
            <person name="Balakrishnan L."/>
            <person name="Muthusamy B."/>
            <person name="Yadav A.K."/>
            <person name="Shrivastava P."/>
            <person name="Marimuthu A."/>
            <person name="Anand S."/>
            <person name="Sundaram H."/>
            <person name="Kingsbury R."/>
            <person name="Harsha H.C."/>
            <person name="Nair B."/>
            <person name="Prasad T.S."/>
            <person name="Chauhan D.S."/>
            <person name="Katoch K."/>
            <person name="Katoch V.M."/>
            <person name="Kumar P."/>
            <person name="Chaerkady R."/>
            <person name="Ramachandran S."/>
            <person name="Dash D."/>
            <person name="Pandey A."/>
        </authorList>
    </citation>
    <scope>IDENTIFICATION BY MASS SPECTROMETRY [LARGE SCALE ANALYSIS]</scope>
    <source>
        <strain>ATCC 25618 / H37Rv</strain>
    </source>
</reference>
<reference key="3">
    <citation type="journal article" date="2021" name="Antimicrob. Agents Chemother.">
        <title>Deletion of Rv2571c confers resistance to arylamide compounds in Mycobacterium tuberculosis.</title>
        <authorList>
            <person name="Shelton C.D."/>
            <person name="McNeil M.B."/>
            <person name="Early J.V."/>
            <person name="Ioerger T.R."/>
            <person name="Parish T."/>
        </authorList>
    </citation>
    <scope>FUNCTION</scope>
    <scope>OVEREXPRESSION</scope>
    <scope>DISRUPTION PHENOTYPE</scope>
</reference>
<reference key="4">
    <citation type="journal article" date="2022" name="Antimicrob. Agents Chemother.">
        <authorList>
            <person name="Shelton C.D."/>
            <person name="McNeil M.B."/>
            <person name="Early J.V."/>
            <person name="Ioerger T.R."/>
            <person name="Parish T."/>
        </authorList>
    </citation>
    <scope>ERRATUM OF PUBMED:33619059</scope>
</reference>
<name>ARYLT_MYCTU</name>
<sequence>MSASLLVRTACGGRAVAQRLRTVLWPITQTSVVAGLAWYLTHDVFNHPQAFFAPISAVVCMSATNVLRARRAQQMIVGVALGIVLGAGVHALLGSGPIAMGVVVFIALSVAVLCARGLVAQGLMFINQAAVSAVLVLVFASNGSVVFERLFDALVGGGLAIVFSILLFPPDPVVMLCSARADVLAAVRDILAELVNTVSDPTSAPPDWPMAAADRLHQQLNGLIEVRANAAMVARRAPRRWGVRSTVRDLDQQAVYLALLVSSVLHLARTIAGPGGDKLPTPVHAVLTDLAAGTGLADADPTAANEHAAAARATASTLQSAACGSNEVVRADIVQACVTDLQRVIERPGPSGMSA</sequence>
<comment type="function">
    <text evidence="2">May be involved in the import of arylamide compounds.</text>
</comment>
<comment type="subcellular location">
    <subcellularLocation>
        <location evidence="3">Cell membrane</location>
        <topology evidence="1">Multi-pass membrane protein</topology>
    </subcellularLocation>
</comment>
<comment type="disruption phenotype">
    <text evidence="2">Deletion of the gene confers resistance to arylamide compounds.</text>
</comment>
<comment type="miscellaneous">
    <text evidence="2">Overexpression is toxic in both wild-type and mutant backgrounds.</text>
</comment>
<organism>
    <name type="scientific">Mycobacterium tuberculosis (strain ATCC 25618 / H37Rv)</name>
    <dbReference type="NCBI Taxonomy" id="83332"/>
    <lineage>
        <taxon>Bacteria</taxon>
        <taxon>Bacillati</taxon>
        <taxon>Actinomycetota</taxon>
        <taxon>Actinomycetes</taxon>
        <taxon>Mycobacteriales</taxon>
        <taxon>Mycobacteriaceae</taxon>
        <taxon>Mycobacterium</taxon>
        <taxon>Mycobacterium tuberculosis complex</taxon>
    </lineage>
</organism>
<evidence type="ECO:0000255" key="1"/>
<evidence type="ECO:0000269" key="2">
    <source>
    </source>
</evidence>
<evidence type="ECO:0000305" key="3"/>